<sequence>MTSGSLQFTVLRAVNPATDAQRESMLREPGFGKYHTDHMVSIDYAEGRGWHNARVIPYGPIELDPSAIVLHYAQEVFEGLKAYRWADGSIVSFRADANAARLRSSARRLAIPELPDAVFIESLRQLIAVDKAWVPGAGGEEALYLRPFIFATEPGLGVRPATQYRYLLIASPAGAYFKGGIAPVSVWVSTEYVRACPGGTGAAKFGGNYAASLLAQAEAAENGCDQVVWLDAVERRYIEEMGGMNIFFVLGSGGSARLVTPELSGSLLPGITRDSLLQLAIDAGFAVEERRIDIDEWQKKAAAGEITEVFACGTAAVITPVARVRHGASEFRIADGQPGEVTMALRDTLTGIQRGTFADTHGWMARLG</sequence>
<feature type="chain" id="PRO_0000426825" description="Branched-chain-amino-acid aminotransferase">
    <location>
        <begin position="1"/>
        <end position="368"/>
    </location>
</feature>
<feature type="binding site" evidence="1">
    <location>
        <position position="101"/>
    </location>
    <ligand>
        <name>pyridoxal 5'-phosphate</name>
        <dbReference type="ChEBI" id="CHEBI:597326"/>
    </ligand>
</feature>
<feature type="binding site" evidence="1">
    <location>
        <position position="209"/>
    </location>
    <ligand>
        <name>pyridoxal 5'-phosphate</name>
        <dbReference type="ChEBI" id="CHEBI:597326"/>
    </ligand>
</feature>
<feature type="binding site" evidence="1">
    <location>
        <begin position="271"/>
        <end position="272"/>
    </location>
    <ligand>
        <name>pyridoxal 5'-phosphate</name>
        <dbReference type="ChEBI" id="CHEBI:597326"/>
    </ligand>
</feature>
<feature type="binding site" evidence="1">
    <location>
        <position position="314"/>
    </location>
    <ligand>
        <name>pyridoxal 5'-phosphate</name>
        <dbReference type="ChEBI" id="CHEBI:597326"/>
    </ligand>
</feature>
<feature type="modified residue" description="N6-(pyridoxal phosphate)lysine" evidence="1">
    <location>
        <position position="204"/>
    </location>
</feature>
<protein>
    <recommendedName>
        <fullName>Branched-chain-amino-acid aminotransferase</fullName>
        <shortName>BCAT</shortName>
        <ecNumber>2.6.1.42</ecNumber>
    </recommendedName>
</protein>
<comment type="function">
    <text evidence="1">Catalyzes the reversible transfers of an amino group from glutamate to the alpha-ketoacid of the respective amino acid in the final step in the biosynthesis of branchedchain amino acids.</text>
</comment>
<comment type="catalytic activity">
    <reaction>
        <text>L-leucine + 2-oxoglutarate = 4-methyl-2-oxopentanoate + L-glutamate</text>
        <dbReference type="Rhea" id="RHEA:18321"/>
        <dbReference type="ChEBI" id="CHEBI:16810"/>
        <dbReference type="ChEBI" id="CHEBI:17865"/>
        <dbReference type="ChEBI" id="CHEBI:29985"/>
        <dbReference type="ChEBI" id="CHEBI:57427"/>
        <dbReference type="EC" id="2.6.1.42"/>
    </reaction>
</comment>
<comment type="catalytic activity">
    <reaction>
        <text>L-isoleucine + 2-oxoglutarate = (S)-3-methyl-2-oxopentanoate + L-glutamate</text>
        <dbReference type="Rhea" id="RHEA:24801"/>
        <dbReference type="ChEBI" id="CHEBI:16810"/>
        <dbReference type="ChEBI" id="CHEBI:29985"/>
        <dbReference type="ChEBI" id="CHEBI:35146"/>
        <dbReference type="ChEBI" id="CHEBI:58045"/>
        <dbReference type="EC" id="2.6.1.42"/>
    </reaction>
</comment>
<comment type="catalytic activity">
    <reaction>
        <text>L-valine + 2-oxoglutarate = 3-methyl-2-oxobutanoate + L-glutamate</text>
        <dbReference type="Rhea" id="RHEA:24813"/>
        <dbReference type="ChEBI" id="CHEBI:11851"/>
        <dbReference type="ChEBI" id="CHEBI:16810"/>
        <dbReference type="ChEBI" id="CHEBI:29985"/>
        <dbReference type="ChEBI" id="CHEBI:57762"/>
        <dbReference type="EC" id="2.6.1.42"/>
    </reaction>
</comment>
<comment type="cofactor">
    <cofactor evidence="1">
        <name>pyridoxal 5'-phosphate</name>
        <dbReference type="ChEBI" id="CHEBI:597326"/>
    </cofactor>
</comment>
<comment type="pathway">
    <text>Amino-acid biosynthesis; L-isoleucine biosynthesis; L-isoleucine from 2-oxobutanoate: step 4/4.</text>
</comment>
<comment type="pathway">
    <text>Amino-acid biosynthesis; L-leucine biosynthesis; L-leucine from 3-methyl-2-oxobutanoate: step 4/4.</text>
</comment>
<comment type="pathway">
    <text>Amino-acid biosynthesis; L-valine biosynthesis; L-valine from pyruvate: step 4/4.</text>
</comment>
<comment type="subunit">
    <text evidence="1">Homodimer.</text>
</comment>
<comment type="similarity">
    <text evidence="2">Belongs to the class-IV pyridoxal-phosphate-dependent aminotransferase family.</text>
</comment>
<gene>
    <name type="primary">ilvE</name>
    <name type="ordered locus">MT2266</name>
</gene>
<name>ILVE_MYCTO</name>
<keyword id="KW-0028">Amino-acid biosynthesis</keyword>
<keyword id="KW-0032">Aminotransferase</keyword>
<keyword id="KW-0100">Branched-chain amino acid biosynthesis</keyword>
<keyword id="KW-0663">Pyridoxal phosphate</keyword>
<keyword id="KW-1185">Reference proteome</keyword>
<keyword id="KW-0808">Transferase</keyword>
<accession>P9WQ74</accession>
<accession>L0TBM2</accession>
<accession>Q10399</accession>
<evidence type="ECO:0000250" key="1"/>
<evidence type="ECO:0000305" key="2"/>
<dbReference type="EC" id="2.6.1.42"/>
<dbReference type="EMBL" id="AE000516">
    <property type="protein sequence ID" value="AAK46552.1"/>
    <property type="molecule type" value="Genomic_DNA"/>
</dbReference>
<dbReference type="PIR" id="C70786">
    <property type="entry name" value="C70786"/>
</dbReference>
<dbReference type="RefSeq" id="WP_003411438.1">
    <property type="nucleotide sequence ID" value="NZ_KK341227.1"/>
</dbReference>
<dbReference type="SMR" id="P9WQ74"/>
<dbReference type="KEGG" id="mtc:MT2266"/>
<dbReference type="PATRIC" id="fig|83331.31.peg.2441"/>
<dbReference type="HOGENOM" id="CLU_031922_0_2_11"/>
<dbReference type="UniPathway" id="UPA00047">
    <property type="reaction ID" value="UER00058"/>
</dbReference>
<dbReference type="UniPathway" id="UPA00048">
    <property type="reaction ID" value="UER00073"/>
</dbReference>
<dbReference type="UniPathway" id="UPA00049">
    <property type="reaction ID" value="UER00062"/>
</dbReference>
<dbReference type="Proteomes" id="UP000001020">
    <property type="component" value="Chromosome"/>
</dbReference>
<dbReference type="GO" id="GO:0052656">
    <property type="term" value="F:L-isoleucine-2-oxoglutarate transaminase activity"/>
    <property type="evidence" value="ECO:0007669"/>
    <property type="project" value="RHEA"/>
</dbReference>
<dbReference type="GO" id="GO:0052654">
    <property type="term" value="F:L-leucine-2-oxoglutarate transaminase activity"/>
    <property type="evidence" value="ECO:0007669"/>
    <property type="project" value="RHEA"/>
</dbReference>
<dbReference type="GO" id="GO:0052655">
    <property type="term" value="F:L-valine-2-oxoglutarate transaminase activity"/>
    <property type="evidence" value="ECO:0007669"/>
    <property type="project" value="RHEA"/>
</dbReference>
<dbReference type="GO" id="GO:0009097">
    <property type="term" value="P:isoleucine biosynthetic process"/>
    <property type="evidence" value="ECO:0007669"/>
    <property type="project" value="UniProtKB-UniPathway"/>
</dbReference>
<dbReference type="GO" id="GO:0009098">
    <property type="term" value="P:L-leucine biosynthetic process"/>
    <property type="evidence" value="ECO:0007669"/>
    <property type="project" value="UniProtKB-UniPathway"/>
</dbReference>
<dbReference type="GO" id="GO:0009099">
    <property type="term" value="P:L-valine biosynthetic process"/>
    <property type="evidence" value="ECO:0007669"/>
    <property type="project" value="UniProtKB-UniPathway"/>
</dbReference>
<dbReference type="CDD" id="cd01557">
    <property type="entry name" value="BCAT_beta_family"/>
    <property type="match status" value="1"/>
</dbReference>
<dbReference type="FunFam" id="3.20.10.10:FF:000009">
    <property type="entry name" value="Branched-chain-amino-acid aminotransferase"/>
    <property type="match status" value="1"/>
</dbReference>
<dbReference type="Gene3D" id="3.30.470.10">
    <property type="match status" value="1"/>
</dbReference>
<dbReference type="Gene3D" id="3.20.10.10">
    <property type="entry name" value="D-amino Acid Aminotransferase, subunit A, domain 2"/>
    <property type="match status" value="1"/>
</dbReference>
<dbReference type="InterPro" id="IPR001544">
    <property type="entry name" value="Aminotrans_IV"/>
</dbReference>
<dbReference type="InterPro" id="IPR018300">
    <property type="entry name" value="Aminotrans_IV_CS"/>
</dbReference>
<dbReference type="InterPro" id="IPR036038">
    <property type="entry name" value="Aminotransferase-like"/>
</dbReference>
<dbReference type="InterPro" id="IPR005786">
    <property type="entry name" value="B_amino_transII"/>
</dbReference>
<dbReference type="InterPro" id="IPR043132">
    <property type="entry name" value="BCAT-like_C"/>
</dbReference>
<dbReference type="InterPro" id="IPR043131">
    <property type="entry name" value="BCAT-like_N"/>
</dbReference>
<dbReference type="InterPro" id="IPR033939">
    <property type="entry name" value="BCAT_family"/>
</dbReference>
<dbReference type="NCBIfam" id="TIGR01123">
    <property type="entry name" value="ilvE_II"/>
    <property type="match status" value="1"/>
</dbReference>
<dbReference type="NCBIfam" id="NF009897">
    <property type="entry name" value="PRK13357.1"/>
    <property type="match status" value="1"/>
</dbReference>
<dbReference type="PANTHER" id="PTHR11825:SF44">
    <property type="entry name" value="BRANCHED-CHAIN-AMINO-ACID AMINOTRANSFERASE"/>
    <property type="match status" value="1"/>
</dbReference>
<dbReference type="PANTHER" id="PTHR11825">
    <property type="entry name" value="SUBGROUP IIII AMINOTRANSFERASE"/>
    <property type="match status" value="1"/>
</dbReference>
<dbReference type="Pfam" id="PF01063">
    <property type="entry name" value="Aminotran_4"/>
    <property type="match status" value="1"/>
</dbReference>
<dbReference type="PIRSF" id="PIRSF006468">
    <property type="entry name" value="BCAT1"/>
    <property type="match status" value="1"/>
</dbReference>
<dbReference type="SUPFAM" id="SSF56752">
    <property type="entry name" value="D-aminoacid aminotransferase-like PLP-dependent enzymes"/>
    <property type="match status" value="1"/>
</dbReference>
<dbReference type="PROSITE" id="PS00770">
    <property type="entry name" value="AA_TRANSFER_CLASS_4"/>
    <property type="match status" value="1"/>
</dbReference>
<reference key="1">
    <citation type="journal article" date="2002" name="J. Bacteriol.">
        <title>Whole-genome comparison of Mycobacterium tuberculosis clinical and laboratory strains.</title>
        <authorList>
            <person name="Fleischmann R.D."/>
            <person name="Alland D."/>
            <person name="Eisen J.A."/>
            <person name="Carpenter L."/>
            <person name="White O."/>
            <person name="Peterson J.D."/>
            <person name="DeBoy R.T."/>
            <person name="Dodson R.J."/>
            <person name="Gwinn M.L."/>
            <person name="Haft D.H."/>
            <person name="Hickey E.K."/>
            <person name="Kolonay J.F."/>
            <person name="Nelson W.C."/>
            <person name="Umayam L.A."/>
            <person name="Ermolaeva M.D."/>
            <person name="Salzberg S.L."/>
            <person name="Delcher A."/>
            <person name="Utterback T.R."/>
            <person name="Weidman J.F."/>
            <person name="Khouri H.M."/>
            <person name="Gill J."/>
            <person name="Mikula A."/>
            <person name="Bishai W."/>
            <person name="Jacobs W.R. Jr."/>
            <person name="Venter J.C."/>
            <person name="Fraser C.M."/>
        </authorList>
    </citation>
    <scope>NUCLEOTIDE SEQUENCE [LARGE SCALE GENOMIC DNA]</scope>
    <source>
        <strain>CDC 1551 / Oshkosh</strain>
    </source>
</reference>
<proteinExistence type="inferred from homology"/>
<organism>
    <name type="scientific">Mycobacterium tuberculosis (strain CDC 1551 / Oshkosh)</name>
    <dbReference type="NCBI Taxonomy" id="83331"/>
    <lineage>
        <taxon>Bacteria</taxon>
        <taxon>Bacillati</taxon>
        <taxon>Actinomycetota</taxon>
        <taxon>Actinomycetes</taxon>
        <taxon>Mycobacteriales</taxon>
        <taxon>Mycobacteriaceae</taxon>
        <taxon>Mycobacterium</taxon>
        <taxon>Mycobacterium tuberculosis complex</taxon>
    </lineage>
</organism>